<dbReference type="EMBL" id="DQ000240">
    <property type="protein sequence ID" value="AAY24528.1"/>
    <property type="molecule type" value="Genomic_DNA"/>
</dbReference>
<dbReference type="GlyCosmos" id="Q4ZJZ0">
    <property type="glycosylation" value="28 sites, No reported glycans"/>
</dbReference>
<dbReference type="KEGG" id="vg:3416071"/>
<dbReference type="Proteomes" id="UP000008168">
    <property type="component" value="Genome"/>
</dbReference>
<dbReference type="GO" id="GO:0033644">
    <property type="term" value="C:host cell membrane"/>
    <property type="evidence" value="ECO:0007669"/>
    <property type="project" value="UniProtKB-SubCell"/>
</dbReference>
<dbReference type="GO" id="GO:0016020">
    <property type="term" value="C:membrane"/>
    <property type="evidence" value="ECO:0007669"/>
    <property type="project" value="UniProtKB-KW"/>
</dbReference>
<dbReference type="GO" id="GO:0052170">
    <property type="term" value="P:symbiont-mediated suppression of host innate immune response"/>
    <property type="evidence" value="ECO:0007669"/>
    <property type="project" value="UniProtKB-KW"/>
</dbReference>
<feature type="signal peptide" evidence="1">
    <location>
        <begin position="1"/>
        <end position="20"/>
    </location>
</feature>
<feature type="chain" id="PRO_0000405391" description="Mucin-like protein Glc1.8a">
    <location>
        <begin position="21"/>
        <end position="515"/>
    </location>
</feature>
<feature type="topological domain" description="Extracellular" evidence="1">
    <location>
        <begin position="21"/>
        <end position="467"/>
    </location>
</feature>
<feature type="transmembrane region" description="Helical" evidence="1">
    <location>
        <begin position="468"/>
        <end position="488"/>
    </location>
</feature>
<feature type="topological domain" description="Cytoplasmic" evidence="1">
    <location>
        <begin position="489"/>
        <end position="515"/>
    </location>
</feature>
<feature type="region of interest" description="Disordered" evidence="2">
    <location>
        <begin position="80"/>
        <end position="114"/>
    </location>
</feature>
<feature type="region of interest" description="Disordered" evidence="2">
    <location>
        <begin position="314"/>
        <end position="358"/>
    </location>
</feature>
<feature type="region of interest" description="Disordered" evidence="2">
    <location>
        <begin position="393"/>
        <end position="413"/>
    </location>
</feature>
<feature type="compositionally biased region" description="Polar residues" evidence="2">
    <location>
        <begin position="86"/>
        <end position="104"/>
    </location>
</feature>
<feature type="compositionally biased region" description="Polar residues" evidence="2">
    <location>
        <begin position="320"/>
        <end position="338"/>
    </location>
</feature>
<feature type="glycosylation site" description="N-linked (GlcNAc...) asparagine; by host" evidence="1">
    <location>
        <position position="24"/>
    </location>
</feature>
<feature type="glycosylation site" description="N-linked (GlcNAc...) asparagine; by host" evidence="1">
    <location>
        <position position="45"/>
    </location>
</feature>
<feature type="glycosylation site" description="N-linked (GlcNAc...) asparagine; by host" evidence="1">
    <location>
        <position position="51"/>
    </location>
</feature>
<feature type="glycosylation site" description="N-linked (GlcNAc...) asparagine; by host" evidence="1">
    <location>
        <position position="60"/>
    </location>
</feature>
<feature type="glycosylation site" description="N-linked (GlcNAc...) asparagine; by host" evidence="1">
    <location>
        <position position="85"/>
    </location>
</feature>
<feature type="glycosylation site" description="N-linked (GlcNAc...) asparagine; by host" evidence="1">
    <location>
        <position position="93"/>
    </location>
</feature>
<feature type="glycosylation site" description="N-linked (GlcNAc...) asparagine; by host" evidence="1">
    <location>
        <position position="102"/>
    </location>
</feature>
<feature type="glycosylation site" description="N-linked (GlcNAc...) asparagine; by host" evidence="1">
    <location>
        <position position="123"/>
    </location>
</feature>
<feature type="glycosylation site" description="N-linked (GlcNAc...) asparagine; by host" evidence="1">
    <location>
        <position position="129"/>
    </location>
</feature>
<feature type="glycosylation site" description="N-linked (GlcNAc...) asparagine; by host" evidence="1">
    <location>
        <position position="138"/>
    </location>
</feature>
<feature type="glycosylation site" description="N-linked (GlcNAc...) asparagine; by host" evidence="1">
    <location>
        <position position="180"/>
    </location>
</feature>
<feature type="glycosylation site" description="N-linked (GlcNAc...) asparagine; by host" evidence="1">
    <location>
        <position position="201"/>
    </location>
</feature>
<feature type="glycosylation site" description="N-linked (GlcNAc...) asparagine; by host" evidence="1">
    <location>
        <position position="207"/>
    </location>
</feature>
<feature type="glycosylation site" description="N-linked (GlcNAc...) asparagine; by host" evidence="1">
    <location>
        <position position="216"/>
    </location>
</feature>
<feature type="glycosylation site" description="N-linked (GlcNAc...) asparagine; by host" evidence="1">
    <location>
        <position position="258"/>
    </location>
</feature>
<feature type="glycosylation site" description="N-linked (GlcNAc...) asparagine; by host" evidence="1">
    <location>
        <position position="279"/>
    </location>
</feature>
<feature type="glycosylation site" description="N-linked (GlcNAc...) asparagine; by host" evidence="1">
    <location>
        <position position="285"/>
    </location>
</feature>
<feature type="glycosylation site" description="N-linked (GlcNAc...) asparagine; by host" evidence="1">
    <location>
        <position position="319"/>
    </location>
</feature>
<feature type="glycosylation site" description="N-linked (GlcNAc...) asparagine; by host" evidence="1">
    <location>
        <position position="327"/>
    </location>
</feature>
<feature type="glycosylation site" description="N-linked (GlcNAc...) asparagine; by host" evidence="1">
    <location>
        <position position="336"/>
    </location>
</feature>
<feature type="glycosylation site" description="N-linked (GlcNAc...) asparagine; by host" evidence="1">
    <location>
        <position position="357"/>
    </location>
</feature>
<feature type="glycosylation site" description="N-linked (GlcNAc...) asparagine; by host" evidence="1">
    <location>
        <position position="363"/>
    </location>
</feature>
<feature type="glycosylation site" description="N-linked (GlcNAc...) asparagine; by host" evidence="1">
    <location>
        <position position="372"/>
    </location>
</feature>
<feature type="glycosylation site" description="N-linked (GlcNAc...) asparagine; by host" evidence="1">
    <location>
        <position position="397"/>
    </location>
</feature>
<feature type="glycosylation site" description="N-linked (GlcNAc...) asparagine; by host" evidence="1">
    <location>
        <position position="405"/>
    </location>
</feature>
<feature type="glycosylation site" description="N-linked (GlcNAc...) asparagine; by host" evidence="1">
    <location>
        <position position="413"/>
    </location>
</feature>
<feature type="glycosylation site" description="N-linked (GlcNAc...) asparagine; by host" evidence="1">
    <location>
        <position position="434"/>
    </location>
</feature>
<feature type="glycosylation site" description="N-linked (GlcNAc...) asparagine; by host" evidence="1">
    <location>
        <position position="441"/>
    </location>
</feature>
<protein>
    <recommendedName>
        <fullName>Mucin-like protein Glc1.8a</fullName>
    </recommendedName>
</protein>
<reference key="1">
    <citation type="journal article" date="2006" name="Virology">
        <title>Polydnavirus genomes reflect their dual roles as mutualists and pathogens.</title>
        <authorList>
            <person name="Webb B.A."/>
            <person name="Strand M.R."/>
            <person name="Dickey S.E."/>
            <person name="Beck M.H."/>
            <person name="Hilgarth R.S."/>
            <person name="Barney W.E."/>
            <person name="Kadash K."/>
            <person name="Kroemer J.A."/>
            <person name="Lindstrom K.G."/>
            <person name="Rattanadechakul W."/>
            <person name="Shelby K.S."/>
            <person name="Thoetkiattikul H."/>
            <person name="Turnbull M.W."/>
            <person name="Witherell R.A."/>
        </authorList>
    </citation>
    <scope>NUCLEOTIDE SEQUENCE [GENOMIC DNA]</scope>
</reference>
<reference key="2">
    <citation type="journal article" date="2000" name="J. Gen. Virol.">
        <title>Characterization of two novel Microplitis demolitor polydnavirus mRNAs expressed in Pseudoplusia includens haemocytes.</title>
        <authorList>
            <person name="Trudeau D."/>
            <person name="Witherell R.A."/>
            <person name="Strand M.R."/>
        </authorList>
    </citation>
    <scope>SUBCELLULAR LOCATION</scope>
</reference>
<reference key="3">
    <citation type="journal article" date="2006" name="Arch. Insect Biochem. Physiol.">
        <title>Microplitis demolitor bracovirus inhibits phagocytosis by hemocytes from Pseudoplusia includens.</title>
        <authorList>
            <person name="Strand M.R."/>
            <person name="Beck M.H."/>
            <person name="Lavine M.D."/>
            <person name="Clark K.D."/>
        </authorList>
    </citation>
    <scope>FUNCTION</scope>
</reference>
<proteinExistence type="inferred from homology"/>
<gene>
    <name type="primary">O9</name>
</gene>
<organismHost>
    <name type="scientific">Microplitis demolitor</name>
    <name type="common">Parasitoid wasp</name>
    <dbReference type="NCBI Taxonomy" id="69319"/>
</organismHost>
<comment type="function">
    <text evidence="3">Involved in suppression of the insect cellular immune response. Inhibits host hemocyte adhesion and phagocytosis.</text>
</comment>
<comment type="subcellular location">
    <subcellularLocation>
        <location evidence="4">Host membrane</location>
        <topology evidence="4">Single-pass membrane protein</topology>
    </subcellularLocation>
</comment>
<comment type="similarity">
    <text evidence="4">Belongs to the polydnaviridae Glc1.8 protein family.</text>
</comment>
<organism>
    <name type="scientific">Microplitis demolitor bracovirus (isolate Webb)</name>
    <name type="common">MdBV</name>
    <dbReference type="NCBI Taxonomy" id="654919"/>
    <lineage>
        <taxon>Viruses</taxon>
        <taxon>Viruses incertae sedis</taxon>
        <taxon>Polydnaviriformidae</taxon>
        <taxon>Bracoviriform</taxon>
        <taxon>Microplitis demolitor bracovirus</taxon>
    </lineage>
</organism>
<accession>Q4ZJZ0</accession>
<keyword id="KW-0325">Glycoprotein</keyword>
<keyword id="KW-1043">Host membrane</keyword>
<keyword id="KW-0945">Host-virus interaction</keyword>
<keyword id="KW-1090">Inhibition of host innate immune response by virus</keyword>
<keyword id="KW-0472">Membrane</keyword>
<keyword id="KW-1185">Reference proteome</keyword>
<keyword id="KW-0732">Signal</keyword>
<keyword id="KW-0812">Transmembrane</keyword>
<keyword id="KW-1133">Transmembrane helix</keyword>
<keyword id="KW-0899">Viral immunoevasion</keyword>
<sequence>MSQITLIILILAIGFSCTKSHPINSTRDGEDSGTDLKNLLTEPANTTYATNSTLTRKELNSTIQPERNDEGSAIRKIMASKKDENITGQSEINTSAKSQPINSTRDGEDSGTDLKNLLTEPANTTYATNSTLTRKELNSSIPPERNDEGSAIRKIMASKKDEIITGQSEINTIAKSQPINSTRDGEDSGTDLKNLLTEPANTTYATNSTLTRKELNSSIPPERNDEGSAIRKIMASKKDEIITGQSEINTIAKSQPINSTRDGEDSGTDLKNLLTELANTTYLTNSTLTRKELNSIIQPERNDESSAIRKIMASKKDENVTGQSEINTSAKSQPINSTRDGEDSGTDLKNLLTDPANTTYATNSTLTRKELNSTIQPERNDETSAIRKIMASRKDENVTGQSEFNISTNSNLNTTTHHEDAVVSPTEKVYVPNNASSAELNVSSTIQPKEADATTSSANDIKKPAFPYCIILITFQIVTVGMIIYLVFRTMRKPCQSERAIPLNTFGFGNNSSHE</sequence>
<name>GL18A_MDBVW</name>
<evidence type="ECO:0000255" key="1"/>
<evidence type="ECO:0000256" key="2">
    <source>
        <dbReference type="SAM" id="MobiDB-lite"/>
    </source>
</evidence>
<evidence type="ECO:0000269" key="3">
    <source>
    </source>
</evidence>
<evidence type="ECO:0000305" key="4"/>